<protein>
    <recommendedName>
        <fullName>4-deoxy-L-threo-5-hexosulose-uronate ketol-isomerase 2</fullName>
        <ecNumber>5.3.1.17</ecNumber>
    </recommendedName>
    <alternativeName>
        <fullName>5-keto-4-deoxyuronate isomerase 2</fullName>
    </alternativeName>
    <alternativeName>
        <fullName>DKI isomerase 2</fullName>
    </alternativeName>
</protein>
<organism>
    <name type="scientific">Rhizobium meliloti (strain 1021)</name>
    <name type="common">Ensifer meliloti</name>
    <name type="synonym">Sinorhizobium meliloti</name>
    <dbReference type="NCBI Taxonomy" id="266834"/>
    <lineage>
        <taxon>Bacteria</taxon>
        <taxon>Pseudomonadati</taxon>
        <taxon>Pseudomonadota</taxon>
        <taxon>Alphaproteobacteria</taxon>
        <taxon>Hyphomicrobiales</taxon>
        <taxon>Rhizobiaceae</taxon>
        <taxon>Sinorhizobium/Ensifer group</taxon>
        <taxon>Sinorhizobium</taxon>
    </lineage>
</organism>
<feature type="chain" id="PRO_0000215494" description="4-deoxy-L-threo-5-hexosulose-uronate ketol-isomerase 2">
    <location>
        <begin position="1"/>
        <end position="282"/>
    </location>
</feature>
<feature type="binding site" evidence="1">
    <location>
        <position position="200"/>
    </location>
    <ligand>
        <name>Zn(2+)</name>
        <dbReference type="ChEBI" id="CHEBI:29105"/>
    </ligand>
</feature>
<feature type="binding site" evidence="1">
    <location>
        <position position="202"/>
    </location>
    <ligand>
        <name>Zn(2+)</name>
        <dbReference type="ChEBI" id="CHEBI:29105"/>
    </ligand>
</feature>
<feature type="binding site" evidence="1">
    <location>
        <position position="207"/>
    </location>
    <ligand>
        <name>Zn(2+)</name>
        <dbReference type="ChEBI" id="CHEBI:29105"/>
    </ligand>
</feature>
<feature type="binding site" evidence="1">
    <location>
        <position position="249"/>
    </location>
    <ligand>
        <name>Zn(2+)</name>
        <dbReference type="ChEBI" id="CHEBI:29105"/>
    </ligand>
</feature>
<geneLocation type="plasmid">
    <name>pSymB</name>
    <name>megaplasmid 2</name>
</geneLocation>
<dbReference type="EC" id="5.3.1.17"/>
<dbReference type="EMBL" id="AL591985">
    <property type="protein sequence ID" value="CAC49325.1"/>
    <property type="molecule type" value="Genomic_DNA"/>
</dbReference>
<dbReference type="PIR" id="E95957">
    <property type="entry name" value="E95957"/>
</dbReference>
<dbReference type="RefSeq" id="NP_437465.1">
    <property type="nucleotide sequence ID" value="NC_003078.1"/>
</dbReference>
<dbReference type="SMR" id="Q92V09"/>
<dbReference type="EnsemblBacteria" id="CAC49325">
    <property type="protein sequence ID" value="CAC49325"/>
    <property type="gene ID" value="SM_b21349"/>
</dbReference>
<dbReference type="KEGG" id="sme:SM_b21349"/>
<dbReference type="PATRIC" id="fig|266834.11.peg.5854"/>
<dbReference type="eggNOG" id="COG3717">
    <property type="taxonomic scope" value="Bacteria"/>
</dbReference>
<dbReference type="HOGENOM" id="CLU_062609_0_0_5"/>
<dbReference type="OrthoDB" id="9770644at2"/>
<dbReference type="UniPathway" id="UPA00545">
    <property type="reaction ID" value="UER00826"/>
</dbReference>
<dbReference type="PRO" id="PR:Q92V09"/>
<dbReference type="Proteomes" id="UP000001976">
    <property type="component" value="Plasmid pSymB"/>
</dbReference>
<dbReference type="GO" id="GO:0008697">
    <property type="term" value="F:4-deoxy-L-threo-5-hexosulose-uronate ketol-isomerase activity"/>
    <property type="evidence" value="ECO:0007669"/>
    <property type="project" value="UniProtKB-UniRule"/>
</dbReference>
<dbReference type="GO" id="GO:0008270">
    <property type="term" value="F:zinc ion binding"/>
    <property type="evidence" value="ECO:0007669"/>
    <property type="project" value="UniProtKB-UniRule"/>
</dbReference>
<dbReference type="GO" id="GO:0019698">
    <property type="term" value="P:D-galacturonate catabolic process"/>
    <property type="evidence" value="ECO:0007669"/>
    <property type="project" value="TreeGrafter"/>
</dbReference>
<dbReference type="GO" id="GO:0042840">
    <property type="term" value="P:D-glucuronate catabolic process"/>
    <property type="evidence" value="ECO:0007669"/>
    <property type="project" value="TreeGrafter"/>
</dbReference>
<dbReference type="GO" id="GO:0045490">
    <property type="term" value="P:pectin catabolic process"/>
    <property type="evidence" value="ECO:0007669"/>
    <property type="project" value="UniProtKB-UniRule"/>
</dbReference>
<dbReference type="CDD" id="cd20491">
    <property type="entry name" value="cupin_KduI_C"/>
    <property type="match status" value="1"/>
</dbReference>
<dbReference type="CDD" id="cd20294">
    <property type="entry name" value="cupin_KduI_N"/>
    <property type="match status" value="1"/>
</dbReference>
<dbReference type="Gene3D" id="2.60.120.10">
    <property type="entry name" value="Jelly Rolls"/>
    <property type="match status" value="1"/>
</dbReference>
<dbReference type="Gene3D" id="2.60.120.520">
    <property type="entry name" value="pectin degrading enzyme 5-keto 4- deoxyuronate isomerase, domain 1"/>
    <property type="match status" value="1"/>
</dbReference>
<dbReference type="HAMAP" id="MF_00687">
    <property type="entry name" value="KduI"/>
    <property type="match status" value="1"/>
</dbReference>
<dbReference type="InterPro" id="IPR007045">
    <property type="entry name" value="KduI"/>
</dbReference>
<dbReference type="InterPro" id="IPR021120">
    <property type="entry name" value="KduI/IolB_isomerase"/>
</dbReference>
<dbReference type="InterPro" id="IPR027449">
    <property type="entry name" value="KduI_N"/>
</dbReference>
<dbReference type="InterPro" id="IPR014710">
    <property type="entry name" value="RmlC-like_jellyroll"/>
</dbReference>
<dbReference type="InterPro" id="IPR011051">
    <property type="entry name" value="RmlC_Cupin_sf"/>
</dbReference>
<dbReference type="NCBIfam" id="NF002091">
    <property type="entry name" value="PRK00924.1"/>
    <property type="match status" value="1"/>
</dbReference>
<dbReference type="PANTHER" id="PTHR38461">
    <property type="entry name" value="4-DEOXY-L-THREO-5-HEXOSULOSE-URONATE KETOL-ISOMERASE"/>
    <property type="match status" value="1"/>
</dbReference>
<dbReference type="PANTHER" id="PTHR38461:SF1">
    <property type="entry name" value="4-DEOXY-L-THREO-5-HEXOSULOSE-URONATE KETOL-ISOMERASE"/>
    <property type="match status" value="1"/>
</dbReference>
<dbReference type="Pfam" id="PF04962">
    <property type="entry name" value="KduI"/>
    <property type="match status" value="1"/>
</dbReference>
<dbReference type="PIRSF" id="PIRSF006625">
    <property type="entry name" value="KduI"/>
    <property type="match status" value="1"/>
</dbReference>
<dbReference type="SUPFAM" id="SSF51182">
    <property type="entry name" value="RmlC-like cupins"/>
    <property type="match status" value="1"/>
</dbReference>
<gene>
    <name type="primary">kduI2</name>
    <name type="ordered locus">RB0925</name>
    <name type="ORF">SMb21349</name>
</gene>
<accession>Q92V09</accession>
<comment type="function">
    <text evidence="1">Catalyzes the isomerization of 5-dehydro-4-deoxy-D-glucuronate to 3-deoxy-D-glycero-2,5-hexodiulosonate.</text>
</comment>
<comment type="catalytic activity">
    <reaction>
        <text>5-dehydro-4-deoxy-D-glucuronate = 3-deoxy-D-glycero-2,5-hexodiulosonate</text>
        <dbReference type="Rhea" id="RHEA:23896"/>
        <dbReference type="ChEBI" id="CHEBI:17117"/>
        <dbReference type="ChEBI" id="CHEBI:29071"/>
        <dbReference type="EC" id="5.3.1.17"/>
    </reaction>
</comment>
<comment type="cofactor">
    <cofactor evidence="1">
        <name>Zn(2+)</name>
        <dbReference type="ChEBI" id="CHEBI:29105"/>
    </cofactor>
    <text evidence="1">Binds 1 zinc ion per subunit.</text>
</comment>
<comment type="pathway">
    <text>Glycan metabolism; pectin degradation; 2-dehydro-3-deoxy-D-gluconate from pectin: step 4/5.</text>
</comment>
<comment type="similarity">
    <text evidence="2">Belongs to the KduI family.</text>
</comment>
<reference key="1">
    <citation type="journal article" date="2001" name="Proc. Natl. Acad. Sci. U.S.A.">
        <title>The complete sequence of the 1,683-kb pSymB megaplasmid from the N2-fixing endosymbiont Sinorhizobium meliloti.</title>
        <authorList>
            <person name="Finan T.M."/>
            <person name="Weidner S."/>
            <person name="Wong K."/>
            <person name="Buhrmester J."/>
            <person name="Chain P."/>
            <person name="Vorhoelter F.J."/>
            <person name="Hernandez-Lucas I."/>
            <person name="Becker A."/>
            <person name="Cowie A."/>
            <person name="Gouzy J."/>
            <person name="Golding B."/>
            <person name="Puehler A."/>
        </authorList>
    </citation>
    <scope>NUCLEOTIDE SEQUENCE [LARGE SCALE GENOMIC DNA]</scope>
    <source>
        <strain>1021</strain>
    </source>
</reference>
<reference key="2">
    <citation type="journal article" date="2001" name="Science">
        <title>The composite genome of the legume symbiont Sinorhizobium meliloti.</title>
        <authorList>
            <person name="Galibert F."/>
            <person name="Finan T.M."/>
            <person name="Long S.R."/>
            <person name="Puehler A."/>
            <person name="Abola P."/>
            <person name="Ampe F."/>
            <person name="Barloy-Hubler F."/>
            <person name="Barnett M.J."/>
            <person name="Becker A."/>
            <person name="Boistard P."/>
            <person name="Bothe G."/>
            <person name="Boutry M."/>
            <person name="Bowser L."/>
            <person name="Buhrmester J."/>
            <person name="Cadieu E."/>
            <person name="Capela D."/>
            <person name="Chain P."/>
            <person name="Cowie A."/>
            <person name="Davis R.W."/>
            <person name="Dreano S."/>
            <person name="Federspiel N.A."/>
            <person name="Fisher R.F."/>
            <person name="Gloux S."/>
            <person name="Godrie T."/>
            <person name="Goffeau A."/>
            <person name="Golding B."/>
            <person name="Gouzy J."/>
            <person name="Gurjal M."/>
            <person name="Hernandez-Lucas I."/>
            <person name="Hong A."/>
            <person name="Huizar L."/>
            <person name="Hyman R.W."/>
            <person name="Jones T."/>
            <person name="Kahn D."/>
            <person name="Kahn M.L."/>
            <person name="Kalman S."/>
            <person name="Keating D.H."/>
            <person name="Kiss E."/>
            <person name="Komp C."/>
            <person name="Lelaure V."/>
            <person name="Masuy D."/>
            <person name="Palm C."/>
            <person name="Peck M.C."/>
            <person name="Pohl T.M."/>
            <person name="Portetelle D."/>
            <person name="Purnelle B."/>
            <person name="Ramsperger U."/>
            <person name="Surzycki R."/>
            <person name="Thebault P."/>
            <person name="Vandenbol M."/>
            <person name="Vorhoelter F.J."/>
            <person name="Weidner S."/>
            <person name="Wells D.H."/>
            <person name="Wong K."/>
            <person name="Yeh K.-C."/>
            <person name="Batut J."/>
        </authorList>
    </citation>
    <scope>NUCLEOTIDE SEQUENCE [LARGE SCALE GENOMIC DNA]</scope>
    <source>
        <strain>1021</strain>
    </source>
</reference>
<proteinExistence type="inferred from homology"/>
<sequence>MTASHIDYTIRYAVDPAAAARMDTDALRANFHIGDLFRQGRISLTYSHYDRMIVGGAMPVDKPLALETIRPTGTARFLERRELIAVNIGGPGRIEMNGESFRLEPRDMAYAGMGEDVTFSSEDPAVPAKFYLLSAPAHQALPRRHIRIGDAKRLDLGSAATSNERSIFQFIHPEGVKTCQLVVGMTQLAPGSVWNTMPCHVHDRRMEAYLYFDLDDSARVLHLMGEPSETRHIVMAREEAVLSPPWSIHSGCGTANYAFIWAMAGDNIDYTDVEMVPMETLR</sequence>
<evidence type="ECO:0000250" key="1"/>
<evidence type="ECO:0000305" key="2"/>
<keyword id="KW-0413">Isomerase</keyword>
<keyword id="KW-0479">Metal-binding</keyword>
<keyword id="KW-0614">Plasmid</keyword>
<keyword id="KW-1185">Reference proteome</keyword>
<keyword id="KW-0862">Zinc</keyword>
<name>KDUI2_RHIME</name>